<comment type="function">
    <text evidence="1">Specifically methylates the N4 position of cytidine in position 1402 (C1402) of 16S rRNA.</text>
</comment>
<comment type="catalytic activity">
    <reaction evidence="1">
        <text>cytidine(1402) in 16S rRNA + S-adenosyl-L-methionine = N(4)-methylcytidine(1402) in 16S rRNA + S-adenosyl-L-homocysteine + H(+)</text>
        <dbReference type="Rhea" id="RHEA:42928"/>
        <dbReference type="Rhea" id="RHEA-COMP:10286"/>
        <dbReference type="Rhea" id="RHEA-COMP:10287"/>
        <dbReference type="ChEBI" id="CHEBI:15378"/>
        <dbReference type="ChEBI" id="CHEBI:57856"/>
        <dbReference type="ChEBI" id="CHEBI:59789"/>
        <dbReference type="ChEBI" id="CHEBI:74506"/>
        <dbReference type="ChEBI" id="CHEBI:82748"/>
        <dbReference type="EC" id="2.1.1.199"/>
    </reaction>
</comment>
<comment type="subcellular location">
    <subcellularLocation>
        <location evidence="1">Cytoplasm</location>
    </subcellularLocation>
</comment>
<comment type="similarity">
    <text evidence="1">Belongs to the methyltransferase superfamily. RsmH family.</text>
</comment>
<proteinExistence type="inferred from homology"/>
<sequence length="317" mass="34546">MAPAMGNELQHRTVLLEEAVQALVTRADGVYVDGTFGRGGHSRLVLEKLAESGRLIAFDKDPLAIATAQQIADPRFGIVHESFASLRTAIAERGVGRVSGVLLDLGISSPQIDDPERGFSFRADGPLDMRMDPTRGESAADWLARATVQELTEVIRDYGEERFAFQIAKALVARRAESDRLGPLVSTGELAQIVANVVKTREKGKDPATRTFQAIRIHINQELAELQVVLEAALSLLEQGGRLVVISFHSLEDRIVKRFMQAHASTPAVDRRLPIRAVDLPSPPLKIIGRVFASDAEVAANPRARSAVMRVAERIAP</sequence>
<accession>B2SYY3</accession>
<feature type="chain" id="PRO_0000386777" description="Ribosomal RNA small subunit methyltransferase H">
    <location>
        <begin position="1"/>
        <end position="317"/>
    </location>
</feature>
<feature type="binding site" evidence="1">
    <location>
        <begin position="39"/>
        <end position="41"/>
    </location>
    <ligand>
        <name>S-adenosyl-L-methionine</name>
        <dbReference type="ChEBI" id="CHEBI:59789"/>
    </ligand>
</feature>
<feature type="binding site" evidence="1">
    <location>
        <position position="59"/>
    </location>
    <ligand>
        <name>S-adenosyl-L-methionine</name>
        <dbReference type="ChEBI" id="CHEBI:59789"/>
    </ligand>
</feature>
<feature type="binding site" evidence="1">
    <location>
        <position position="83"/>
    </location>
    <ligand>
        <name>S-adenosyl-L-methionine</name>
        <dbReference type="ChEBI" id="CHEBI:59789"/>
    </ligand>
</feature>
<feature type="binding site" evidence="1">
    <location>
        <position position="104"/>
    </location>
    <ligand>
        <name>S-adenosyl-L-methionine</name>
        <dbReference type="ChEBI" id="CHEBI:59789"/>
    </ligand>
</feature>
<feature type="binding site" evidence="1">
    <location>
        <position position="111"/>
    </location>
    <ligand>
        <name>S-adenosyl-L-methionine</name>
        <dbReference type="ChEBI" id="CHEBI:59789"/>
    </ligand>
</feature>
<reference key="1">
    <citation type="journal article" date="2011" name="J. Bacteriol.">
        <title>Complete genome sequence of the plant growth-promoting endophyte Burkholderia phytofirmans strain PsJN.</title>
        <authorList>
            <person name="Weilharter A."/>
            <person name="Mitter B."/>
            <person name="Shin M.V."/>
            <person name="Chain P.S."/>
            <person name="Nowak J."/>
            <person name="Sessitsch A."/>
        </authorList>
    </citation>
    <scope>NUCLEOTIDE SEQUENCE [LARGE SCALE GENOMIC DNA]</scope>
    <source>
        <strain>DSM 17436 / LMG 22146 / PsJN</strain>
    </source>
</reference>
<keyword id="KW-0963">Cytoplasm</keyword>
<keyword id="KW-0489">Methyltransferase</keyword>
<keyword id="KW-0698">rRNA processing</keyword>
<keyword id="KW-0949">S-adenosyl-L-methionine</keyword>
<keyword id="KW-0808">Transferase</keyword>
<gene>
    <name evidence="1" type="primary">rsmH</name>
    <name type="synonym">mraW</name>
    <name type="ordered locus">Bphyt_3478</name>
</gene>
<name>RSMH_PARPJ</name>
<evidence type="ECO:0000255" key="1">
    <source>
        <dbReference type="HAMAP-Rule" id="MF_01007"/>
    </source>
</evidence>
<organism>
    <name type="scientific">Paraburkholderia phytofirmans (strain DSM 17436 / LMG 22146 / PsJN)</name>
    <name type="common">Burkholderia phytofirmans</name>
    <dbReference type="NCBI Taxonomy" id="398527"/>
    <lineage>
        <taxon>Bacteria</taxon>
        <taxon>Pseudomonadati</taxon>
        <taxon>Pseudomonadota</taxon>
        <taxon>Betaproteobacteria</taxon>
        <taxon>Burkholderiales</taxon>
        <taxon>Burkholderiaceae</taxon>
        <taxon>Paraburkholderia</taxon>
    </lineage>
</organism>
<protein>
    <recommendedName>
        <fullName evidence="1">Ribosomal RNA small subunit methyltransferase H</fullName>
        <ecNumber evidence="1">2.1.1.199</ecNumber>
    </recommendedName>
    <alternativeName>
        <fullName evidence="1">16S rRNA m(4)C1402 methyltransferase</fullName>
    </alternativeName>
    <alternativeName>
        <fullName evidence="1">rRNA (cytosine-N(4)-)-methyltransferase RsmH</fullName>
    </alternativeName>
</protein>
<dbReference type="EC" id="2.1.1.199" evidence="1"/>
<dbReference type="EMBL" id="CP001052">
    <property type="protein sequence ID" value="ACD17868.1"/>
    <property type="molecule type" value="Genomic_DNA"/>
</dbReference>
<dbReference type="SMR" id="B2SYY3"/>
<dbReference type="STRING" id="398527.Bphyt_3478"/>
<dbReference type="KEGG" id="bpy:Bphyt_3478"/>
<dbReference type="eggNOG" id="COG0275">
    <property type="taxonomic scope" value="Bacteria"/>
</dbReference>
<dbReference type="HOGENOM" id="CLU_038422_2_0_4"/>
<dbReference type="OrthoDB" id="9806637at2"/>
<dbReference type="Proteomes" id="UP000001739">
    <property type="component" value="Chromosome 1"/>
</dbReference>
<dbReference type="GO" id="GO:0005737">
    <property type="term" value="C:cytoplasm"/>
    <property type="evidence" value="ECO:0007669"/>
    <property type="project" value="UniProtKB-SubCell"/>
</dbReference>
<dbReference type="GO" id="GO:0071424">
    <property type="term" value="F:rRNA (cytosine-N4-)-methyltransferase activity"/>
    <property type="evidence" value="ECO:0007669"/>
    <property type="project" value="UniProtKB-UniRule"/>
</dbReference>
<dbReference type="GO" id="GO:0070475">
    <property type="term" value="P:rRNA base methylation"/>
    <property type="evidence" value="ECO:0007669"/>
    <property type="project" value="UniProtKB-UniRule"/>
</dbReference>
<dbReference type="Gene3D" id="1.10.150.170">
    <property type="entry name" value="Putative methyltransferase TM0872, insert domain"/>
    <property type="match status" value="1"/>
</dbReference>
<dbReference type="Gene3D" id="3.40.50.150">
    <property type="entry name" value="Vaccinia Virus protein VP39"/>
    <property type="match status" value="1"/>
</dbReference>
<dbReference type="HAMAP" id="MF_01007">
    <property type="entry name" value="16SrRNA_methyltr_H"/>
    <property type="match status" value="1"/>
</dbReference>
<dbReference type="InterPro" id="IPR002903">
    <property type="entry name" value="RsmH"/>
</dbReference>
<dbReference type="InterPro" id="IPR023397">
    <property type="entry name" value="SAM-dep_MeTrfase_MraW_recog"/>
</dbReference>
<dbReference type="InterPro" id="IPR029063">
    <property type="entry name" value="SAM-dependent_MTases_sf"/>
</dbReference>
<dbReference type="NCBIfam" id="TIGR00006">
    <property type="entry name" value="16S rRNA (cytosine(1402)-N(4))-methyltransferase RsmH"/>
    <property type="match status" value="1"/>
</dbReference>
<dbReference type="PANTHER" id="PTHR11265:SF0">
    <property type="entry name" value="12S RRNA N4-METHYLCYTIDINE METHYLTRANSFERASE"/>
    <property type="match status" value="1"/>
</dbReference>
<dbReference type="PANTHER" id="PTHR11265">
    <property type="entry name" value="S-ADENOSYL-METHYLTRANSFERASE MRAW"/>
    <property type="match status" value="1"/>
</dbReference>
<dbReference type="Pfam" id="PF01795">
    <property type="entry name" value="Methyltransf_5"/>
    <property type="match status" value="1"/>
</dbReference>
<dbReference type="PIRSF" id="PIRSF004486">
    <property type="entry name" value="MraW"/>
    <property type="match status" value="1"/>
</dbReference>
<dbReference type="SUPFAM" id="SSF81799">
    <property type="entry name" value="Putative methyltransferase TM0872, insert domain"/>
    <property type="match status" value="1"/>
</dbReference>
<dbReference type="SUPFAM" id="SSF53335">
    <property type="entry name" value="S-adenosyl-L-methionine-dependent methyltransferases"/>
    <property type="match status" value="1"/>
</dbReference>